<name>PYRR_NITOC</name>
<evidence type="ECO:0000255" key="1">
    <source>
        <dbReference type="HAMAP-Rule" id="MF_01219"/>
    </source>
</evidence>
<gene>
    <name evidence="1" type="primary">pyrR</name>
    <name type="ordered locus">Noc_0366</name>
</gene>
<proteinExistence type="inferred from homology"/>
<accession>Q3JE54</accession>
<reference key="1">
    <citation type="journal article" date="2006" name="Appl. Environ. Microbiol.">
        <title>Complete genome sequence of the marine, chemolithoautotrophic, ammonia-oxidizing bacterium Nitrosococcus oceani ATCC 19707.</title>
        <authorList>
            <person name="Klotz M.G."/>
            <person name="Arp D.J."/>
            <person name="Chain P.S.G."/>
            <person name="El-Sheikh A.F."/>
            <person name="Hauser L.J."/>
            <person name="Hommes N.G."/>
            <person name="Larimer F.W."/>
            <person name="Malfatti S.A."/>
            <person name="Norton J.M."/>
            <person name="Poret-Peterson A.T."/>
            <person name="Vergez L.M."/>
            <person name="Ward B.B."/>
        </authorList>
    </citation>
    <scope>NUCLEOTIDE SEQUENCE [LARGE SCALE GENOMIC DNA]</scope>
    <source>
        <strain>ATCC 19707 / BCRC 17464 / JCM 30415 / NCIMB 11848 / C-107</strain>
    </source>
</reference>
<comment type="function">
    <text evidence="1">Regulates the transcription of the pyrimidine nucleotide (pyr) operon in response to exogenous pyrimidines.</text>
</comment>
<comment type="function">
    <text evidence="1">Also displays a weak uracil phosphoribosyltransferase activity which is not physiologically significant.</text>
</comment>
<comment type="catalytic activity">
    <reaction evidence="1">
        <text>UMP + diphosphate = 5-phospho-alpha-D-ribose 1-diphosphate + uracil</text>
        <dbReference type="Rhea" id="RHEA:13017"/>
        <dbReference type="ChEBI" id="CHEBI:17568"/>
        <dbReference type="ChEBI" id="CHEBI:33019"/>
        <dbReference type="ChEBI" id="CHEBI:57865"/>
        <dbReference type="ChEBI" id="CHEBI:58017"/>
        <dbReference type="EC" id="2.4.2.9"/>
    </reaction>
</comment>
<comment type="similarity">
    <text evidence="1">Belongs to the purine/pyrimidine phosphoribosyltransferase family. PyrR subfamily.</text>
</comment>
<feature type="chain" id="PRO_1000053852" description="Bifunctional protein PyrR">
    <location>
        <begin position="1"/>
        <end position="177"/>
    </location>
</feature>
<feature type="short sequence motif" description="PRPP-binding" evidence="1">
    <location>
        <begin position="97"/>
        <end position="109"/>
    </location>
</feature>
<keyword id="KW-0328">Glycosyltransferase</keyword>
<keyword id="KW-1185">Reference proteome</keyword>
<keyword id="KW-0804">Transcription</keyword>
<keyword id="KW-0805">Transcription regulation</keyword>
<keyword id="KW-0808">Transferase</keyword>
<protein>
    <recommendedName>
        <fullName evidence="1">Bifunctional protein PyrR</fullName>
    </recommendedName>
    <domain>
        <recommendedName>
            <fullName evidence="1">Pyrimidine operon regulatory protein</fullName>
        </recommendedName>
    </domain>
    <domain>
        <recommendedName>
            <fullName evidence="1">Uracil phosphoribosyltransferase</fullName>
            <shortName evidence="1">UPRTase</shortName>
            <ecNumber evidence="1">2.4.2.9</ecNumber>
        </recommendedName>
    </domain>
</protein>
<sequence length="177" mass="19685">MNIPQPVSLNIDALFRNLATGLNQRMAEQERNKPAMIGIHTGGVWVAERLLNQLDNLVSDPLGVLNIAYYRDDFTRIGMHPQVQPSQLPFSVADRHIILVDDVLYTGRTVRAALNEIFDYGRPASVTLAALVERAGRELPIQADVVGHHLDLAPNEQVKLTGPDPLQFSIQYIDPTE</sequence>
<dbReference type="EC" id="2.4.2.9" evidence="1"/>
<dbReference type="EMBL" id="CP000127">
    <property type="protein sequence ID" value="ABA56892.1"/>
    <property type="molecule type" value="Genomic_DNA"/>
</dbReference>
<dbReference type="RefSeq" id="WP_002812066.1">
    <property type="nucleotide sequence ID" value="NC_007484.1"/>
</dbReference>
<dbReference type="SMR" id="Q3JE54"/>
<dbReference type="STRING" id="323261.Noc_0366"/>
<dbReference type="KEGG" id="noc:Noc_0366"/>
<dbReference type="eggNOG" id="COG2065">
    <property type="taxonomic scope" value="Bacteria"/>
</dbReference>
<dbReference type="HOGENOM" id="CLU_094234_1_1_6"/>
<dbReference type="InParanoid" id="Q3JE54"/>
<dbReference type="Proteomes" id="UP000006838">
    <property type="component" value="Chromosome"/>
</dbReference>
<dbReference type="GO" id="GO:0004845">
    <property type="term" value="F:uracil phosphoribosyltransferase activity"/>
    <property type="evidence" value="ECO:0007669"/>
    <property type="project" value="UniProtKB-UniRule"/>
</dbReference>
<dbReference type="GO" id="GO:0006355">
    <property type="term" value="P:regulation of DNA-templated transcription"/>
    <property type="evidence" value="ECO:0007669"/>
    <property type="project" value="UniProtKB-UniRule"/>
</dbReference>
<dbReference type="CDD" id="cd06223">
    <property type="entry name" value="PRTases_typeI"/>
    <property type="match status" value="1"/>
</dbReference>
<dbReference type="Gene3D" id="3.40.50.2020">
    <property type="match status" value="1"/>
</dbReference>
<dbReference type="HAMAP" id="MF_01219">
    <property type="entry name" value="PyrR"/>
    <property type="match status" value="1"/>
</dbReference>
<dbReference type="InterPro" id="IPR000836">
    <property type="entry name" value="PRibTrfase_dom"/>
</dbReference>
<dbReference type="InterPro" id="IPR029057">
    <property type="entry name" value="PRTase-like"/>
</dbReference>
<dbReference type="InterPro" id="IPR023050">
    <property type="entry name" value="PyrR"/>
</dbReference>
<dbReference type="InterPro" id="IPR050137">
    <property type="entry name" value="PyrR_bifunctional"/>
</dbReference>
<dbReference type="NCBIfam" id="NF003545">
    <property type="entry name" value="PRK05205.1-1"/>
    <property type="match status" value="1"/>
</dbReference>
<dbReference type="PANTHER" id="PTHR11608">
    <property type="entry name" value="BIFUNCTIONAL PROTEIN PYRR"/>
    <property type="match status" value="1"/>
</dbReference>
<dbReference type="PANTHER" id="PTHR11608:SF0">
    <property type="entry name" value="BIFUNCTIONAL PROTEIN PYRR"/>
    <property type="match status" value="1"/>
</dbReference>
<dbReference type="Pfam" id="PF00156">
    <property type="entry name" value="Pribosyltran"/>
    <property type="match status" value="1"/>
</dbReference>
<dbReference type="SUPFAM" id="SSF53271">
    <property type="entry name" value="PRTase-like"/>
    <property type="match status" value="1"/>
</dbReference>
<organism>
    <name type="scientific">Nitrosococcus oceani (strain ATCC 19707 / BCRC 17464 / JCM 30415 / NCIMB 11848 / C-107)</name>
    <dbReference type="NCBI Taxonomy" id="323261"/>
    <lineage>
        <taxon>Bacteria</taxon>
        <taxon>Pseudomonadati</taxon>
        <taxon>Pseudomonadota</taxon>
        <taxon>Gammaproteobacteria</taxon>
        <taxon>Chromatiales</taxon>
        <taxon>Chromatiaceae</taxon>
        <taxon>Nitrosococcus</taxon>
    </lineage>
</organism>